<sequence length="426" mass="49040">MMPTLAPPSVLSAPQRRCQILLTLFQPGLTATMATFSELNGVDDDIASLDISETGREILRYHQLTLTTGYDGSYRVEGTVLNQRLCLFHWLRRGFRLCPSFITSQFTPALKSELKRRGIARNFYDDTNLQALVNLCSRRLQKRFESRDIHFLCLYLQYCLLQHHAGITPQFNPLQRRWAESCLEFQVAQEIGRHWQRRALQPVPPDEPLFMALLFSMLRVPDPLRDAHQRDRQLRQSIKRLVNHFRELGNVRFYDEQGLCDQLYTHLAQALNRSLFAIGIDNTLPEEFARLYPRLVRTTRAALAGFESEYGVHLSDEESGLVAVIFGAWLMQENDLHEKQIILLTGNDSEREAQIEQQLRELTLLPLNIKHMSVKAFLQTGAPRGAALIIAPYTMPLPLFSPPLIYTDLTLTTHQQEQIRKMLESA</sequence>
<keyword id="KW-1185">Reference proteome</keyword>
<keyword id="KW-0677">Repeat</keyword>
<feature type="chain" id="PRO_0000079400" description="Stationary phase-inducible protein CsiE">
    <location>
        <begin position="1"/>
        <end position="426"/>
    </location>
</feature>
<feature type="domain" description="PRD 1" evidence="1">
    <location>
        <begin position="120"/>
        <end position="225"/>
    </location>
</feature>
<feature type="domain" description="PRD 2" evidence="1">
    <location>
        <begin position="229"/>
        <end position="336"/>
    </location>
</feature>
<feature type="sequence conflict" description="In Ref. 1; AAA98796." evidence="2" ref="1">
    <original>I</original>
    <variation>L</variation>
    <location>
        <position position="342"/>
    </location>
</feature>
<name>CSIE_ECOLI</name>
<accession>P54901</accession>
<accession>P76582</accession>
<accession>P77573</accession>
<reference key="1">
    <citation type="submission" date="1996-05" db="EMBL/GenBank/DDBJ databases">
        <title>Complete coding sequence of the csiE gene of Escherichia coli.</title>
        <authorList>
            <person name="Marschall C."/>
            <person name="Hengge-Aronis R."/>
        </authorList>
    </citation>
    <scope>NUCLEOTIDE SEQUENCE [GENOMIC DNA]</scope>
    <source>
        <strain>K12 / MC4100 / ATCC 35695 / DSM 6574</strain>
    </source>
</reference>
<reference key="2">
    <citation type="journal article" date="1997" name="DNA Res.">
        <title>Construction of a contiguous 874-kb sequence of the Escherichia coli-K12 genome corresponding to 50.0-68.8 min on the linkage map and analysis of its sequence features.</title>
        <authorList>
            <person name="Yamamoto Y."/>
            <person name="Aiba H."/>
            <person name="Baba T."/>
            <person name="Hayashi K."/>
            <person name="Inada T."/>
            <person name="Isono K."/>
            <person name="Itoh T."/>
            <person name="Kimura S."/>
            <person name="Kitagawa M."/>
            <person name="Makino K."/>
            <person name="Miki T."/>
            <person name="Mitsuhashi N."/>
            <person name="Mizobuchi K."/>
            <person name="Mori H."/>
            <person name="Nakade S."/>
            <person name="Nakamura Y."/>
            <person name="Nashimoto H."/>
            <person name="Oshima T."/>
            <person name="Oyama S."/>
            <person name="Saito N."/>
            <person name="Sampei G."/>
            <person name="Satoh Y."/>
            <person name="Sivasundaram S."/>
            <person name="Tagami H."/>
            <person name="Takahashi H."/>
            <person name="Takeda J."/>
            <person name="Takemoto K."/>
            <person name="Uehara K."/>
            <person name="Wada C."/>
            <person name="Yamagata S."/>
            <person name="Horiuchi T."/>
        </authorList>
    </citation>
    <scope>NUCLEOTIDE SEQUENCE [LARGE SCALE GENOMIC DNA]</scope>
    <source>
        <strain>K12 / W3110 / ATCC 27325 / DSM 5911</strain>
    </source>
</reference>
<reference key="3">
    <citation type="journal article" date="1997" name="Science">
        <title>The complete genome sequence of Escherichia coli K-12.</title>
        <authorList>
            <person name="Blattner F.R."/>
            <person name="Plunkett G. III"/>
            <person name="Bloch C.A."/>
            <person name="Perna N.T."/>
            <person name="Burland V."/>
            <person name="Riley M."/>
            <person name="Collado-Vides J."/>
            <person name="Glasner J.D."/>
            <person name="Rode C.K."/>
            <person name="Mayhew G.F."/>
            <person name="Gregor J."/>
            <person name="Davis N.W."/>
            <person name="Kirkpatrick H.A."/>
            <person name="Goeden M.A."/>
            <person name="Rose D.J."/>
            <person name="Mau B."/>
            <person name="Shao Y."/>
        </authorList>
    </citation>
    <scope>NUCLEOTIDE SEQUENCE [LARGE SCALE GENOMIC DNA]</scope>
    <source>
        <strain>K12 / MG1655 / ATCC 47076</strain>
    </source>
</reference>
<reference key="4">
    <citation type="journal article" date="2006" name="Mol. Syst. Biol.">
        <title>Highly accurate genome sequences of Escherichia coli K-12 strains MG1655 and W3110.</title>
        <authorList>
            <person name="Hayashi K."/>
            <person name="Morooka N."/>
            <person name="Yamamoto Y."/>
            <person name="Fujita K."/>
            <person name="Isono K."/>
            <person name="Choi S."/>
            <person name="Ohtsubo E."/>
            <person name="Baba T."/>
            <person name="Wanner B.L."/>
            <person name="Mori H."/>
            <person name="Horiuchi T."/>
        </authorList>
    </citation>
    <scope>NUCLEOTIDE SEQUENCE [LARGE SCALE GENOMIC DNA]</scope>
    <source>
        <strain>K12 / W3110 / ATCC 27325 / DSM 5911</strain>
    </source>
</reference>
<evidence type="ECO:0000255" key="1">
    <source>
        <dbReference type="PROSITE-ProRule" id="PRU00704"/>
    </source>
</evidence>
<evidence type="ECO:0000305" key="2"/>
<comment type="sequence caution" evidence="2">
    <conflict type="frameshift">
        <sequence resource="EMBL-CDS" id="AAA98796"/>
    </conflict>
</comment>
<organism>
    <name type="scientific">Escherichia coli (strain K12)</name>
    <dbReference type="NCBI Taxonomy" id="83333"/>
    <lineage>
        <taxon>Bacteria</taxon>
        <taxon>Pseudomonadati</taxon>
        <taxon>Pseudomonadota</taxon>
        <taxon>Gammaproteobacteria</taxon>
        <taxon>Enterobacterales</taxon>
        <taxon>Enterobacteriaceae</taxon>
        <taxon>Escherichia</taxon>
    </lineage>
</organism>
<dbReference type="EMBL" id="L77687">
    <property type="protein sequence ID" value="AAA98796.1"/>
    <property type="status" value="ALT_FRAME"/>
    <property type="molecule type" value="Genomic_DNA"/>
</dbReference>
<dbReference type="EMBL" id="U00096">
    <property type="protein sequence ID" value="AAC75588.2"/>
    <property type="molecule type" value="Genomic_DNA"/>
</dbReference>
<dbReference type="EMBL" id="AP009048">
    <property type="protein sequence ID" value="BAA16429.2"/>
    <property type="molecule type" value="Genomic_DNA"/>
</dbReference>
<dbReference type="RefSeq" id="NP_417030.2">
    <property type="nucleotide sequence ID" value="NC_000913.3"/>
</dbReference>
<dbReference type="RefSeq" id="WP_000982994.1">
    <property type="nucleotide sequence ID" value="NZ_STEB01000011.1"/>
</dbReference>
<dbReference type="SMR" id="P54901"/>
<dbReference type="BioGRID" id="4261386">
    <property type="interactions" value="14"/>
</dbReference>
<dbReference type="DIP" id="DIP-9332N"/>
<dbReference type="FunCoup" id="P54901">
    <property type="interactions" value="61"/>
</dbReference>
<dbReference type="STRING" id="511145.b2535"/>
<dbReference type="jPOST" id="P54901"/>
<dbReference type="PaxDb" id="511145-b2535"/>
<dbReference type="EnsemblBacteria" id="AAC75588">
    <property type="protein sequence ID" value="AAC75588"/>
    <property type="gene ID" value="b2535"/>
</dbReference>
<dbReference type="GeneID" id="947009"/>
<dbReference type="KEGG" id="ecj:JW5878"/>
<dbReference type="KEGG" id="eco:b2535"/>
<dbReference type="KEGG" id="ecoc:C3026_14045"/>
<dbReference type="PATRIC" id="fig|1411691.4.peg.4199"/>
<dbReference type="EchoBASE" id="EB3194"/>
<dbReference type="eggNOG" id="COG3711">
    <property type="taxonomic scope" value="Bacteria"/>
</dbReference>
<dbReference type="HOGENOM" id="CLU_059716_0_0_6"/>
<dbReference type="InParanoid" id="P54901"/>
<dbReference type="OMA" id="YPRLMRT"/>
<dbReference type="OrthoDB" id="6415323at2"/>
<dbReference type="PhylomeDB" id="P54901"/>
<dbReference type="BioCyc" id="EcoCyc:G7329-MONOMER"/>
<dbReference type="PRO" id="PR:P54901"/>
<dbReference type="Proteomes" id="UP000000625">
    <property type="component" value="Chromosome"/>
</dbReference>
<dbReference type="GO" id="GO:0006355">
    <property type="term" value="P:regulation of DNA-templated transcription"/>
    <property type="evidence" value="ECO:0007669"/>
    <property type="project" value="InterPro"/>
</dbReference>
<dbReference type="Gene3D" id="1.10.1790.10">
    <property type="entry name" value="PRD domain"/>
    <property type="match status" value="1"/>
</dbReference>
<dbReference type="InterPro" id="IPR050661">
    <property type="entry name" value="BglG_antiterminators"/>
</dbReference>
<dbReference type="InterPro" id="IPR011608">
    <property type="entry name" value="PRD"/>
</dbReference>
<dbReference type="InterPro" id="IPR036634">
    <property type="entry name" value="PRD_sf"/>
</dbReference>
<dbReference type="NCBIfam" id="NF008597">
    <property type="entry name" value="PRK11564.1"/>
    <property type="match status" value="1"/>
</dbReference>
<dbReference type="PANTHER" id="PTHR30185">
    <property type="entry name" value="CRYPTIC BETA-GLUCOSIDE BGL OPERON ANTITERMINATOR"/>
    <property type="match status" value="1"/>
</dbReference>
<dbReference type="PANTHER" id="PTHR30185:SF14">
    <property type="entry name" value="STATIONARY PHASE-INDUCIBLE PROTEIN CSIE-RELATED"/>
    <property type="match status" value="1"/>
</dbReference>
<dbReference type="Pfam" id="PF00874">
    <property type="entry name" value="PRD"/>
    <property type="match status" value="2"/>
</dbReference>
<dbReference type="SUPFAM" id="SSF63520">
    <property type="entry name" value="PTS-regulatory domain, PRD"/>
    <property type="match status" value="1"/>
</dbReference>
<dbReference type="PROSITE" id="PS51372">
    <property type="entry name" value="PRD_2"/>
    <property type="match status" value="2"/>
</dbReference>
<protein>
    <recommendedName>
        <fullName>Stationary phase-inducible protein CsiE</fullName>
    </recommendedName>
</protein>
<proteinExistence type="predicted"/>
<gene>
    <name type="primary">csiE</name>
    <name type="ordered locus">b2535</name>
    <name type="ordered locus">JW5878</name>
</gene>